<feature type="transit peptide" description="Mitochondrion" evidence="1">
    <location>
        <begin position="1"/>
        <end position="35"/>
    </location>
</feature>
<feature type="chain" id="PRO_0000431505" description="Neutral/alkaline invertase 1, mitochondrial" evidence="1">
    <location>
        <begin position="36"/>
        <end position="628"/>
    </location>
</feature>
<feature type="region of interest" description="Disordered" evidence="2">
    <location>
        <begin position="79"/>
        <end position="113"/>
    </location>
</feature>
<feature type="compositionally biased region" description="Low complexity" evidence="2">
    <location>
        <begin position="79"/>
        <end position="90"/>
    </location>
</feature>
<feature type="sequence conflict" description="In Ref. 5; AK103334." evidence="5" ref="5">
    <original>E</original>
    <variation>V</variation>
    <location>
        <position position="397"/>
    </location>
</feature>
<sequence>MAAAAISHLRRGAPRHARALLYLSTRRFSSSSAAGVAPLAAVAASARRLLSTSVDSGASSTGESYKPPLFDPFRAASLASSAPPLESPPIEELPDDATPPPEEEPGLPAPEKDPVATACQHELEGLKAWVETVRSRKESTEEKEAWSLLGRSVVSYCGTAVGTVAANDPSTANQMLNYDQVFIRDFVPSAIAFLLKGEGDIVKNFLLHTLQLQSWEKTVDCYSPGQGLMPASFKVRSIPLDGNSEAFEEVLDPDFGESAIGRVAPVDSGLWWIILLRAYGKITGDYALQERVDVQTGIRLILNLCLSDGFDMFPTLLVTDGSCMIDRRMGIHGHPLEIQSLFYSALRCAREMVSVNDGSNSLIRAINYRLSALSFHIREYYWVDMKKINEIYRYKTEEYSHDAINKFNIYPEQIPSWLADWIPEKGGYLIGNLQPAHMDFRFFSLGNLWAIISSLATQRQAEGILNLIEAKWEDIIANMPLKICYPALEYEEWRIITGSDPKNTPWSYHNGGSWPTLLWQFTLACIKMGRRDLAQRAIEVAEKRLSEDKWPEYYDTRTGRFIGKQSRLYQTWTIAGYLSSKMLLDCPELASILICEEDLELLEGCACSVNKSARTKCSRRAARSQVLV</sequence>
<organism>
    <name type="scientific">Oryza sativa subsp. japonica</name>
    <name type="common">Rice</name>
    <dbReference type="NCBI Taxonomy" id="39947"/>
    <lineage>
        <taxon>Eukaryota</taxon>
        <taxon>Viridiplantae</taxon>
        <taxon>Streptophyta</taxon>
        <taxon>Embryophyta</taxon>
        <taxon>Tracheophyta</taxon>
        <taxon>Spermatophyta</taxon>
        <taxon>Magnoliopsida</taxon>
        <taxon>Liliopsida</taxon>
        <taxon>Poales</taxon>
        <taxon>Poaceae</taxon>
        <taxon>BOP clade</taxon>
        <taxon>Oryzoideae</taxon>
        <taxon>Oryzeae</taxon>
        <taxon>Oryzinae</taxon>
        <taxon>Oryza</taxon>
        <taxon>Oryza sativa</taxon>
    </lineage>
</organism>
<evidence type="ECO:0000255" key="1"/>
<evidence type="ECO:0000256" key="2">
    <source>
        <dbReference type="SAM" id="MobiDB-lite"/>
    </source>
</evidence>
<evidence type="ECO:0000269" key="3">
    <source>
    </source>
</evidence>
<evidence type="ECO:0000303" key="4">
    <source>
    </source>
</evidence>
<evidence type="ECO:0000305" key="5"/>
<evidence type="ECO:0000312" key="6">
    <source>
        <dbReference type="EMBL" id="ABF95611.1"/>
    </source>
</evidence>
<evidence type="ECO:0000312" key="7">
    <source>
        <dbReference type="EMBL" id="BAF11850.1"/>
    </source>
</evidence>
<protein>
    <recommendedName>
        <fullName evidence="5">Neutral/alkaline invertase 1, mitochondrial</fullName>
        <shortName evidence="4">OsNIN1</shortName>
        <ecNumber evidence="3">3.2.1.26</ecNumber>
    </recommendedName>
</protein>
<reference key="1">
    <citation type="journal article" date="2005" name="Genome Res.">
        <title>Sequence, annotation, and analysis of synteny between rice chromosome 3 and diverged grass species.</title>
        <authorList>
            <consortium name="The rice chromosome 3 sequencing consortium"/>
            <person name="Buell C.R."/>
            <person name="Yuan Q."/>
            <person name="Ouyang S."/>
            <person name="Liu J."/>
            <person name="Zhu W."/>
            <person name="Wang A."/>
            <person name="Maiti R."/>
            <person name="Haas B."/>
            <person name="Wortman J."/>
            <person name="Pertea M."/>
            <person name="Jones K.M."/>
            <person name="Kim M."/>
            <person name="Overton L."/>
            <person name="Tsitrin T."/>
            <person name="Fadrosh D."/>
            <person name="Bera J."/>
            <person name="Weaver B."/>
            <person name="Jin S."/>
            <person name="Johri S."/>
            <person name="Reardon M."/>
            <person name="Webb K."/>
            <person name="Hill J."/>
            <person name="Moffat K."/>
            <person name="Tallon L."/>
            <person name="Van Aken S."/>
            <person name="Lewis M."/>
            <person name="Utterback T."/>
            <person name="Feldblyum T."/>
            <person name="Zismann V."/>
            <person name="Iobst S."/>
            <person name="Hsiao J."/>
            <person name="de Vazeille A.R."/>
            <person name="Salzberg S.L."/>
            <person name="White O."/>
            <person name="Fraser C.M."/>
            <person name="Yu Y."/>
            <person name="Kim H."/>
            <person name="Rambo T."/>
            <person name="Currie J."/>
            <person name="Collura K."/>
            <person name="Kernodle-Thompson S."/>
            <person name="Wei F."/>
            <person name="Kudrna K."/>
            <person name="Ammiraju J.S.S."/>
            <person name="Luo M."/>
            <person name="Goicoechea J.L."/>
            <person name="Wing R.A."/>
            <person name="Henry D."/>
            <person name="Oates R."/>
            <person name="Palmer M."/>
            <person name="Pries G."/>
            <person name="Saski C."/>
            <person name="Simmons J."/>
            <person name="Soderlund C."/>
            <person name="Nelson W."/>
            <person name="de la Bastide M."/>
            <person name="Spiegel L."/>
            <person name="Nascimento L."/>
            <person name="Huang E."/>
            <person name="Preston R."/>
            <person name="Zutavern T."/>
            <person name="Palmer L."/>
            <person name="O'Shaughnessy A."/>
            <person name="Dike S."/>
            <person name="McCombie W.R."/>
            <person name="Minx P."/>
            <person name="Cordum H."/>
            <person name="Wilson R."/>
            <person name="Jin W."/>
            <person name="Lee H.R."/>
            <person name="Jiang J."/>
            <person name="Jackson S."/>
        </authorList>
    </citation>
    <scope>NUCLEOTIDE SEQUENCE [LARGE SCALE GENOMIC DNA]</scope>
    <source>
        <strain>cv. Nipponbare</strain>
    </source>
</reference>
<reference key="2">
    <citation type="journal article" date="2005" name="Nature">
        <title>The map-based sequence of the rice genome.</title>
        <authorList>
            <consortium name="International rice genome sequencing project (IRGSP)"/>
        </authorList>
    </citation>
    <scope>NUCLEOTIDE SEQUENCE [LARGE SCALE GENOMIC DNA]</scope>
    <source>
        <strain>cv. Nipponbare</strain>
    </source>
</reference>
<reference key="3">
    <citation type="journal article" date="2008" name="Nucleic Acids Res.">
        <title>The rice annotation project database (RAP-DB): 2008 update.</title>
        <authorList>
            <consortium name="The rice annotation project (RAP)"/>
        </authorList>
    </citation>
    <scope>GENOME REANNOTATION</scope>
    <source>
        <strain>cv. Nipponbare</strain>
    </source>
</reference>
<reference key="4">
    <citation type="journal article" date="2013" name="Rice">
        <title>Improvement of the Oryza sativa Nipponbare reference genome using next generation sequence and optical map data.</title>
        <authorList>
            <person name="Kawahara Y."/>
            <person name="de la Bastide M."/>
            <person name="Hamilton J.P."/>
            <person name="Kanamori H."/>
            <person name="McCombie W.R."/>
            <person name="Ouyang S."/>
            <person name="Schwartz D.C."/>
            <person name="Tanaka T."/>
            <person name="Wu J."/>
            <person name="Zhou S."/>
            <person name="Childs K.L."/>
            <person name="Davidson R.M."/>
            <person name="Lin H."/>
            <person name="Quesada-Ocampo L."/>
            <person name="Vaillancourt B."/>
            <person name="Sakai H."/>
            <person name="Lee S.S."/>
            <person name="Kim J."/>
            <person name="Numa H."/>
            <person name="Itoh T."/>
            <person name="Buell C.R."/>
            <person name="Matsumoto T."/>
        </authorList>
    </citation>
    <scope>GENOME REANNOTATION</scope>
    <source>
        <strain>cv. Nipponbare</strain>
    </source>
</reference>
<reference key="5">
    <citation type="journal article" date="2003" name="Science">
        <title>Collection, mapping, and annotation of over 28,000 cDNA clones from japonica rice.</title>
        <authorList>
            <consortium name="The rice full-length cDNA consortium"/>
        </authorList>
    </citation>
    <scope>NUCLEOTIDE SEQUENCE [LARGE SCALE MRNA]</scope>
    <source>
        <strain>cv. Nipponbare</strain>
    </source>
</reference>
<reference key="6">
    <citation type="journal article" date="2007" name="Planta">
        <title>Genes for alkaline/neutral invertase in rice: alkaline/neutral invertases are located in plant mitochondria and also in plastids.</title>
        <authorList>
            <person name="Murayama S."/>
            <person name="Handa H."/>
        </authorList>
    </citation>
    <scope>FUNCTION</scope>
    <scope>CATALYTIC ACTIVITY</scope>
    <scope>BIOPHYSICOCHEMICAL PROPERTIES</scope>
    <scope>SUBCELLULAR LOCATION</scope>
    <scope>TISSUE SPECIFICITY</scope>
</reference>
<name>NIN1_ORYSJ</name>
<dbReference type="EC" id="3.2.1.26" evidence="3"/>
<dbReference type="EMBL" id="AC145491">
    <property type="status" value="NOT_ANNOTATED_CDS"/>
    <property type="molecule type" value="Genomic_DNA"/>
</dbReference>
<dbReference type="EMBL" id="DP000009">
    <property type="protein sequence ID" value="ABF95611.1"/>
    <property type="molecule type" value="Genomic_DNA"/>
</dbReference>
<dbReference type="EMBL" id="AP008209">
    <property type="protein sequence ID" value="BAF11850.1"/>
    <property type="molecule type" value="Genomic_DNA"/>
</dbReference>
<dbReference type="EMBL" id="AP014959">
    <property type="protein sequence ID" value="BAS83897.1"/>
    <property type="molecule type" value="Genomic_DNA"/>
</dbReference>
<dbReference type="EMBL" id="AK103334">
    <property type="status" value="NOT_ANNOTATED_CDS"/>
    <property type="molecule type" value="mRNA"/>
</dbReference>
<dbReference type="RefSeq" id="XP_015632948.1">
    <property type="nucleotide sequence ID" value="XM_015777462.1"/>
</dbReference>
<dbReference type="SMR" id="Q10MC0"/>
<dbReference type="FunCoup" id="Q10MC0">
    <property type="interactions" value="419"/>
</dbReference>
<dbReference type="STRING" id="39947.Q10MC0"/>
<dbReference type="PaxDb" id="39947-Q10MC0"/>
<dbReference type="EnsemblPlants" id="Os03t0314800-01">
    <property type="protein sequence ID" value="Os03t0314800-01"/>
    <property type="gene ID" value="Os03g0314800"/>
</dbReference>
<dbReference type="Gramene" id="Os03t0314800-01">
    <property type="protein sequence ID" value="Os03t0314800-01"/>
    <property type="gene ID" value="Os03g0314800"/>
</dbReference>
<dbReference type="KEGG" id="dosa:Os03g0314800"/>
<dbReference type="eggNOG" id="ENOG502QT23">
    <property type="taxonomic scope" value="Eukaryota"/>
</dbReference>
<dbReference type="HOGENOM" id="CLU_020846_0_0_1"/>
<dbReference type="InParanoid" id="Q10MC0"/>
<dbReference type="OMA" id="HEQNESI"/>
<dbReference type="OrthoDB" id="1848038at2759"/>
<dbReference type="Proteomes" id="UP000000763">
    <property type="component" value="Chromosome 3"/>
</dbReference>
<dbReference type="Proteomes" id="UP000059680">
    <property type="component" value="Chromosome 3"/>
</dbReference>
<dbReference type="GO" id="GO:0005739">
    <property type="term" value="C:mitochondrion"/>
    <property type="evidence" value="ECO:0000314"/>
    <property type="project" value="UniProtKB"/>
</dbReference>
<dbReference type="GO" id="GO:0033926">
    <property type="term" value="F:endo-alpha-N-acetylgalactosaminidase activity"/>
    <property type="evidence" value="ECO:0007669"/>
    <property type="project" value="InterPro"/>
</dbReference>
<dbReference type="GO" id="GO:0004575">
    <property type="term" value="F:sucrose alpha-glucosidase activity"/>
    <property type="evidence" value="ECO:0000314"/>
    <property type="project" value="UniProtKB"/>
</dbReference>
<dbReference type="GO" id="GO:0005987">
    <property type="term" value="P:sucrose catabolic process"/>
    <property type="evidence" value="ECO:0000314"/>
    <property type="project" value="UniProtKB"/>
</dbReference>
<dbReference type="FunFam" id="1.50.10.10:FF:000001">
    <property type="entry name" value="probable alkaline/neutral invertase B"/>
    <property type="match status" value="1"/>
</dbReference>
<dbReference type="Gene3D" id="1.50.10.10">
    <property type="match status" value="1"/>
</dbReference>
<dbReference type="InterPro" id="IPR008928">
    <property type="entry name" value="6-hairpin_glycosidase_sf"/>
</dbReference>
<dbReference type="InterPro" id="IPR012341">
    <property type="entry name" value="6hp_glycosidase-like_sf"/>
</dbReference>
<dbReference type="InterPro" id="IPR024746">
    <property type="entry name" value="Glyco_hydro_100"/>
</dbReference>
<dbReference type="PANTHER" id="PTHR31916">
    <property type="match status" value="1"/>
</dbReference>
<dbReference type="PANTHER" id="PTHR31916:SF60">
    <property type="entry name" value="NEUTRAL_ALKALINE INVERTASE 1, MITOCHONDRIAL"/>
    <property type="match status" value="1"/>
</dbReference>
<dbReference type="Pfam" id="PF12899">
    <property type="entry name" value="Glyco_hydro_100"/>
    <property type="match status" value="1"/>
</dbReference>
<dbReference type="SUPFAM" id="SSF48208">
    <property type="entry name" value="Six-hairpin glycosidases"/>
    <property type="match status" value="1"/>
</dbReference>
<keyword id="KW-0119">Carbohydrate metabolism</keyword>
<keyword id="KW-0326">Glycosidase</keyword>
<keyword id="KW-0378">Hydrolase</keyword>
<keyword id="KW-0496">Mitochondrion</keyword>
<keyword id="KW-1185">Reference proteome</keyword>
<keyword id="KW-0809">Transit peptide</keyword>
<gene>
    <name evidence="4" type="primary">NIN1</name>
    <name evidence="7" type="ordered locus">Os03g0314800</name>
    <name evidence="6" type="ordered locus">LOC_Os03g20020</name>
</gene>
<comment type="function">
    <text evidence="3">Mitochondrial invertase that cleaves sucrose into glucose and fructose.</text>
</comment>
<comment type="catalytic activity">
    <reaction evidence="3">
        <text>Hydrolysis of terminal non-reducing beta-D-fructofuranoside residues in beta-D-fructofuranosides.</text>
        <dbReference type="EC" id="3.2.1.26"/>
    </reaction>
</comment>
<comment type="biophysicochemical properties">
    <phDependence>
        <text evidence="3">Optimum pH is 7.0-8.0.</text>
    </phDependence>
</comment>
<comment type="subcellular location">
    <subcellularLocation>
        <location evidence="3">Mitochondrion</location>
    </subcellularLocation>
</comment>
<comment type="tissue specificity">
    <text evidence="3">Expressed in roots, leaf and stems.</text>
</comment>
<comment type="similarity">
    <text evidence="5">Belongs to the glycosyl hydrolase 100 family.</text>
</comment>
<proteinExistence type="evidence at protein level"/>
<accession>Q10MC0</accession>
<accession>A0A0N7KH58</accession>